<organism>
    <name type="scientific">Homo sapiens</name>
    <name type="common">Human</name>
    <dbReference type="NCBI Taxonomy" id="9606"/>
    <lineage>
        <taxon>Eukaryota</taxon>
        <taxon>Metazoa</taxon>
        <taxon>Chordata</taxon>
        <taxon>Craniata</taxon>
        <taxon>Vertebrata</taxon>
        <taxon>Euteleostomi</taxon>
        <taxon>Mammalia</taxon>
        <taxon>Eutheria</taxon>
        <taxon>Euarchontoglires</taxon>
        <taxon>Primates</taxon>
        <taxon>Haplorrhini</taxon>
        <taxon>Catarrhini</taxon>
        <taxon>Hominidae</taxon>
        <taxon>Homo</taxon>
    </lineage>
</organism>
<feature type="signal peptide" evidence="1">
    <location>
        <begin position="1"/>
        <end position="25"/>
    </location>
</feature>
<feature type="chain" id="PRO_0000328880" description="Fibronectin type III domain-containing protein 7">
    <location>
        <begin position="26"/>
        <end position="733"/>
    </location>
</feature>
<feature type="domain" description="Fibronectin type-III 1" evidence="2">
    <location>
        <begin position="28"/>
        <end position="115"/>
    </location>
</feature>
<feature type="domain" description="Fibronectin type-III 2" evidence="2">
    <location>
        <begin position="116"/>
        <end position="202"/>
    </location>
</feature>
<feature type="domain" description="Fibronectin type-III 3" evidence="2">
    <location>
        <begin position="203"/>
        <end position="288"/>
    </location>
</feature>
<feature type="domain" description="Fibronectin type-III 4" evidence="2">
    <location>
        <begin position="289"/>
        <end position="373"/>
    </location>
</feature>
<feature type="domain" description="Fibronectin type-III 5" evidence="2">
    <location>
        <begin position="374"/>
        <end position="459"/>
    </location>
</feature>
<feature type="domain" description="Fibronectin type-III 6" evidence="2">
    <location>
        <begin position="460"/>
        <end position="544"/>
    </location>
</feature>
<feature type="domain" description="Fibronectin type-III 7" evidence="2">
    <location>
        <begin position="545"/>
        <end position="632"/>
    </location>
</feature>
<feature type="domain" description="Fibronectin type-III 8" evidence="2">
    <location>
        <begin position="631"/>
        <end position="715"/>
    </location>
</feature>
<feature type="glycosylation site" description="N-linked (GlcNAc...) asparagine" evidence="1">
    <location>
        <position position="230"/>
    </location>
</feature>
<feature type="glycosylation site" description="N-linked (GlcNAc...) asparagine" evidence="1">
    <location>
        <position position="433"/>
    </location>
</feature>
<feature type="sequence variant" id="VAR_042570" description="In dbSNP:rs11582005.">
    <original>S</original>
    <variation>N</variation>
    <location>
        <position position="309"/>
    </location>
</feature>
<feature type="sequence variant" id="VAR_042571" description="In dbSNP:rs4494160." evidence="3">
    <original>V</original>
    <variation>A</variation>
    <location>
        <position position="353"/>
    </location>
</feature>
<feature type="sequence variant" id="VAR_042572" description="In dbSNP:rs3006870.">
    <original>N</original>
    <variation>S</variation>
    <location>
        <position position="367"/>
    </location>
</feature>
<feature type="sequence variant" id="VAR_042573" description="In dbSNP:rs1277017.">
    <original>P</original>
    <variation>L</variation>
    <location>
        <position position="685"/>
    </location>
</feature>
<feature type="sequence conflict" description="In Ref. 2; AAH57762." evidence="4" ref="2">
    <original>S</original>
    <variation>F</variation>
    <location>
        <position position="210"/>
    </location>
</feature>
<feature type="sequence conflict" description="In Ref. 2; AAH57762." evidence="4" ref="2">
    <original>R</original>
    <variation>L</variation>
    <location>
        <position position="224"/>
    </location>
</feature>
<reference key="1">
    <citation type="journal article" date="2006" name="Nature">
        <title>The DNA sequence and biological annotation of human chromosome 1.</title>
        <authorList>
            <person name="Gregory S.G."/>
            <person name="Barlow K.F."/>
            <person name="McLay K.E."/>
            <person name="Kaul R."/>
            <person name="Swarbreck D."/>
            <person name="Dunham A."/>
            <person name="Scott C.E."/>
            <person name="Howe K.L."/>
            <person name="Woodfine K."/>
            <person name="Spencer C.C.A."/>
            <person name="Jones M.C."/>
            <person name="Gillson C."/>
            <person name="Searle S."/>
            <person name="Zhou Y."/>
            <person name="Kokocinski F."/>
            <person name="McDonald L."/>
            <person name="Evans R."/>
            <person name="Phillips K."/>
            <person name="Atkinson A."/>
            <person name="Cooper R."/>
            <person name="Jones C."/>
            <person name="Hall R.E."/>
            <person name="Andrews T.D."/>
            <person name="Lloyd C."/>
            <person name="Ainscough R."/>
            <person name="Almeida J.P."/>
            <person name="Ambrose K.D."/>
            <person name="Anderson F."/>
            <person name="Andrew R.W."/>
            <person name="Ashwell R.I.S."/>
            <person name="Aubin K."/>
            <person name="Babbage A.K."/>
            <person name="Bagguley C.L."/>
            <person name="Bailey J."/>
            <person name="Beasley H."/>
            <person name="Bethel G."/>
            <person name="Bird C.P."/>
            <person name="Bray-Allen S."/>
            <person name="Brown J.Y."/>
            <person name="Brown A.J."/>
            <person name="Buckley D."/>
            <person name="Burton J."/>
            <person name="Bye J."/>
            <person name="Carder C."/>
            <person name="Chapman J.C."/>
            <person name="Clark S.Y."/>
            <person name="Clarke G."/>
            <person name="Clee C."/>
            <person name="Cobley V."/>
            <person name="Collier R.E."/>
            <person name="Corby N."/>
            <person name="Coville G.J."/>
            <person name="Davies J."/>
            <person name="Deadman R."/>
            <person name="Dunn M."/>
            <person name="Earthrowl M."/>
            <person name="Ellington A.G."/>
            <person name="Errington H."/>
            <person name="Frankish A."/>
            <person name="Frankland J."/>
            <person name="French L."/>
            <person name="Garner P."/>
            <person name="Garnett J."/>
            <person name="Gay L."/>
            <person name="Ghori M.R.J."/>
            <person name="Gibson R."/>
            <person name="Gilby L.M."/>
            <person name="Gillett W."/>
            <person name="Glithero R.J."/>
            <person name="Grafham D.V."/>
            <person name="Griffiths C."/>
            <person name="Griffiths-Jones S."/>
            <person name="Grocock R."/>
            <person name="Hammond S."/>
            <person name="Harrison E.S.I."/>
            <person name="Hart E."/>
            <person name="Haugen E."/>
            <person name="Heath P.D."/>
            <person name="Holmes S."/>
            <person name="Holt K."/>
            <person name="Howden P.J."/>
            <person name="Hunt A.R."/>
            <person name="Hunt S.E."/>
            <person name="Hunter G."/>
            <person name="Isherwood J."/>
            <person name="James R."/>
            <person name="Johnson C."/>
            <person name="Johnson D."/>
            <person name="Joy A."/>
            <person name="Kay M."/>
            <person name="Kershaw J.K."/>
            <person name="Kibukawa M."/>
            <person name="Kimberley A.M."/>
            <person name="King A."/>
            <person name="Knights A.J."/>
            <person name="Lad H."/>
            <person name="Laird G."/>
            <person name="Lawlor S."/>
            <person name="Leongamornlert D.A."/>
            <person name="Lloyd D.M."/>
            <person name="Loveland J."/>
            <person name="Lovell J."/>
            <person name="Lush M.J."/>
            <person name="Lyne R."/>
            <person name="Martin S."/>
            <person name="Mashreghi-Mohammadi M."/>
            <person name="Matthews L."/>
            <person name="Matthews N.S.W."/>
            <person name="McLaren S."/>
            <person name="Milne S."/>
            <person name="Mistry S."/>
            <person name="Moore M.J.F."/>
            <person name="Nickerson T."/>
            <person name="O'Dell C.N."/>
            <person name="Oliver K."/>
            <person name="Palmeiri A."/>
            <person name="Palmer S.A."/>
            <person name="Parker A."/>
            <person name="Patel D."/>
            <person name="Pearce A.V."/>
            <person name="Peck A.I."/>
            <person name="Pelan S."/>
            <person name="Phelps K."/>
            <person name="Phillimore B.J."/>
            <person name="Plumb R."/>
            <person name="Rajan J."/>
            <person name="Raymond C."/>
            <person name="Rouse G."/>
            <person name="Saenphimmachak C."/>
            <person name="Sehra H.K."/>
            <person name="Sheridan E."/>
            <person name="Shownkeen R."/>
            <person name="Sims S."/>
            <person name="Skuce C.D."/>
            <person name="Smith M."/>
            <person name="Steward C."/>
            <person name="Subramanian S."/>
            <person name="Sycamore N."/>
            <person name="Tracey A."/>
            <person name="Tromans A."/>
            <person name="Van Helmond Z."/>
            <person name="Wall M."/>
            <person name="Wallis J.M."/>
            <person name="White S."/>
            <person name="Whitehead S.L."/>
            <person name="Wilkinson J.E."/>
            <person name="Willey D.L."/>
            <person name="Williams H."/>
            <person name="Wilming L."/>
            <person name="Wray P.W."/>
            <person name="Wu Z."/>
            <person name="Coulson A."/>
            <person name="Vaudin M."/>
            <person name="Sulston J.E."/>
            <person name="Durbin R.M."/>
            <person name="Hubbard T."/>
            <person name="Wooster R."/>
            <person name="Dunham I."/>
            <person name="Carter N.P."/>
            <person name="McVean G."/>
            <person name="Ross M.T."/>
            <person name="Harrow J."/>
            <person name="Olson M.V."/>
            <person name="Beck S."/>
            <person name="Rogers J."/>
            <person name="Bentley D.R."/>
        </authorList>
    </citation>
    <scope>NUCLEOTIDE SEQUENCE [LARGE SCALE GENOMIC DNA]</scope>
</reference>
<reference key="2">
    <citation type="journal article" date="2004" name="Genome Res.">
        <title>The status, quality, and expansion of the NIH full-length cDNA project: the Mammalian Gene Collection (MGC).</title>
        <authorList>
            <consortium name="The MGC Project Team"/>
        </authorList>
    </citation>
    <scope>NUCLEOTIDE SEQUENCE [LARGE SCALE MRNA] OF 210-733</scope>
    <scope>VARIANT ALA-353</scope>
    <source>
        <tissue>Brain</tissue>
        <tissue>Testis</tissue>
    </source>
</reference>
<reference key="3">
    <citation type="journal article" date="2004" name="Nat. Genet.">
        <title>Complete sequencing and characterization of 21,243 full-length human cDNAs.</title>
        <authorList>
            <person name="Ota T."/>
            <person name="Suzuki Y."/>
            <person name="Nishikawa T."/>
            <person name="Otsuki T."/>
            <person name="Sugiyama T."/>
            <person name="Irie R."/>
            <person name="Wakamatsu A."/>
            <person name="Hayashi K."/>
            <person name="Sato H."/>
            <person name="Nagai K."/>
            <person name="Kimura K."/>
            <person name="Makita H."/>
            <person name="Sekine M."/>
            <person name="Obayashi M."/>
            <person name="Nishi T."/>
            <person name="Shibahara T."/>
            <person name="Tanaka T."/>
            <person name="Ishii S."/>
            <person name="Yamamoto J."/>
            <person name="Saito K."/>
            <person name="Kawai Y."/>
            <person name="Isono Y."/>
            <person name="Nakamura Y."/>
            <person name="Nagahari K."/>
            <person name="Murakami K."/>
            <person name="Yasuda T."/>
            <person name="Iwayanagi T."/>
            <person name="Wagatsuma M."/>
            <person name="Shiratori A."/>
            <person name="Sudo H."/>
            <person name="Hosoiri T."/>
            <person name="Kaku Y."/>
            <person name="Kodaira H."/>
            <person name="Kondo H."/>
            <person name="Sugawara M."/>
            <person name="Takahashi M."/>
            <person name="Kanda K."/>
            <person name="Yokoi T."/>
            <person name="Furuya T."/>
            <person name="Kikkawa E."/>
            <person name="Omura Y."/>
            <person name="Abe K."/>
            <person name="Kamihara K."/>
            <person name="Katsuta N."/>
            <person name="Sato K."/>
            <person name="Tanikawa M."/>
            <person name="Yamazaki M."/>
            <person name="Ninomiya K."/>
            <person name="Ishibashi T."/>
            <person name="Yamashita H."/>
            <person name="Murakawa K."/>
            <person name="Fujimori K."/>
            <person name="Tanai H."/>
            <person name="Kimata M."/>
            <person name="Watanabe M."/>
            <person name="Hiraoka S."/>
            <person name="Chiba Y."/>
            <person name="Ishida S."/>
            <person name="Ono Y."/>
            <person name="Takiguchi S."/>
            <person name="Watanabe S."/>
            <person name="Yosida M."/>
            <person name="Hotuta T."/>
            <person name="Kusano J."/>
            <person name="Kanehori K."/>
            <person name="Takahashi-Fujii A."/>
            <person name="Hara H."/>
            <person name="Tanase T.-O."/>
            <person name="Nomura Y."/>
            <person name="Togiya S."/>
            <person name="Komai F."/>
            <person name="Hara R."/>
            <person name="Takeuchi K."/>
            <person name="Arita M."/>
            <person name="Imose N."/>
            <person name="Musashino K."/>
            <person name="Yuuki H."/>
            <person name="Oshima A."/>
            <person name="Sasaki N."/>
            <person name="Aotsuka S."/>
            <person name="Yoshikawa Y."/>
            <person name="Matsunawa H."/>
            <person name="Ichihara T."/>
            <person name="Shiohata N."/>
            <person name="Sano S."/>
            <person name="Moriya S."/>
            <person name="Momiyama H."/>
            <person name="Satoh N."/>
            <person name="Takami S."/>
            <person name="Terashima Y."/>
            <person name="Suzuki O."/>
            <person name="Nakagawa S."/>
            <person name="Senoh A."/>
            <person name="Mizoguchi H."/>
            <person name="Goto Y."/>
            <person name="Shimizu F."/>
            <person name="Wakebe H."/>
            <person name="Hishigaki H."/>
            <person name="Watanabe T."/>
            <person name="Sugiyama A."/>
            <person name="Takemoto M."/>
            <person name="Kawakami B."/>
            <person name="Yamazaki M."/>
            <person name="Watanabe K."/>
            <person name="Kumagai A."/>
            <person name="Itakura S."/>
            <person name="Fukuzumi Y."/>
            <person name="Fujimori Y."/>
            <person name="Komiyama M."/>
            <person name="Tashiro H."/>
            <person name="Tanigami A."/>
            <person name="Fujiwara T."/>
            <person name="Ono T."/>
            <person name="Yamada K."/>
            <person name="Fujii Y."/>
            <person name="Ozaki K."/>
            <person name="Hirao M."/>
            <person name="Ohmori Y."/>
            <person name="Kawabata A."/>
            <person name="Hikiji T."/>
            <person name="Kobatake N."/>
            <person name="Inagaki H."/>
            <person name="Ikema Y."/>
            <person name="Okamoto S."/>
            <person name="Okitani R."/>
            <person name="Kawakami T."/>
            <person name="Noguchi S."/>
            <person name="Itoh T."/>
            <person name="Shigeta K."/>
            <person name="Senba T."/>
            <person name="Matsumura K."/>
            <person name="Nakajima Y."/>
            <person name="Mizuno T."/>
            <person name="Morinaga M."/>
            <person name="Sasaki M."/>
            <person name="Togashi T."/>
            <person name="Oyama M."/>
            <person name="Hata H."/>
            <person name="Watanabe M."/>
            <person name="Komatsu T."/>
            <person name="Mizushima-Sugano J."/>
            <person name="Satoh T."/>
            <person name="Shirai Y."/>
            <person name="Takahashi Y."/>
            <person name="Nakagawa K."/>
            <person name="Okumura K."/>
            <person name="Nagase T."/>
            <person name="Nomura N."/>
            <person name="Kikuchi H."/>
            <person name="Masuho Y."/>
            <person name="Yamashita R."/>
            <person name="Nakai K."/>
            <person name="Yada T."/>
            <person name="Nakamura Y."/>
            <person name="Ohara O."/>
            <person name="Isogai T."/>
            <person name="Sugano S."/>
        </authorList>
    </citation>
    <scope>NUCLEOTIDE SEQUENCE [LARGE SCALE MRNA] OF 226-733</scope>
    <source>
        <tissue>Testis</tissue>
    </source>
</reference>
<comment type="subcellular location">
    <subcellularLocation>
        <location evidence="4">Secreted</location>
    </subcellularLocation>
</comment>
<comment type="sequence caution" evidence="4">
    <conflict type="erroneous initiation">
        <sequence resource="EMBL-CDS" id="AAH57762"/>
    </conflict>
    <text>Truncated N-terminus.</text>
</comment>
<comment type="sequence caution" evidence="4">
    <conflict type="erroneous initiation">
        <sequence resource="EMBL-CDS" id="AAI30422"/>
    </conflict>
    <text>Truncated N-terminus.</text>
</comment>
<comment type="sequence caution" evidence="4">
    <conflict type="erroneous initiation">
        <sequence resource="EMBL-CDS" id="BAC04077"/>
    </conflict>
    <text>Truncated N-terminus.</text>
</comment>
<proteinExistence type="evidence at protein level"/>
<gene>
    <name type="primary">FNDC7</name>
</gene>
<protein>
    <recommendedName>
        <fullName>Fibronectin type III domain-containing protein 7</fullName>
    </recommendedName>
</protein>
<keyword id="KW-0325">Glycoprotein</keyword>
<keyword id="KW-1267">Proteomics identification</keyword>
<keyword id="KW-1185">Reference proteome</keyword>
<keyword id="KW-0677">Repeat</keyword>
<keyword id="KW-0964">Secreted</keyword>
<keyword id="KW-0732">Signal</keyword>
<name>FNDC7_HUMAN</name>
<evidence type="ECO:0000255" key="1"/>
<evidence type="ECO:0000255" key="2">
    <source>
        <dbReference type="PROSITE-ProRule" id="PRU00316"/>
    </source>
</evidence>
<evidence type="ECO:0000269" key="3">
    <source>
    </source>
</evidence>
<evidence type="ECO:0000305" key="4"/>
<accession>Q5VTL7</accession>
<accession>A1L468</accession>
<accession>E9PAZ5</accession>
<accession>Q6PF16</accession>
<accession>Q8NA51</accession>
<dbReference type="EMBL" id="AL591719">
    <property type="status" value="NOT_ANNOTATED_CDS"/>
    <property type="molecule type" value="Genomic_DNA"/>
</dbReference>
<dbReference type="EMBL" id="BC057762">
    <property type="protein sequence ID" value="AAH57762.1"/>
    <property type="status" value="ALT_INIT"/>
    <property type="molecule type" value="mRNA"/>
</dbReference>
<dbReference type="EMBL" id="BC130421">
    <property type="protein sequence ID" value="AAI30422.1"/>
    <property type="status" value="ALT_INIT"/>
    <property type="molecule type" value="mRNA"/>
</dbReference>
<dbReference type="EMBL" id="AK093157">
    <property type="protein sequence ID" value="BAC04077.1"/>
    <property type="status" value="ALT_INIT"/>
    <property type="molecule type" value="mRNA"/>
</dbReference>
<dbReference type="CCDS" id="CCDS44185.1"/>
<dbReference type="RefSeq" id="NP_001138409.1">
    <property type="nucleotide sequence ID" value="NM_001144937.3"/>
</dbReference>
<dbReference type="SMR" id="Q5VTL7"/>
<dbReference type="BioGRID" id="127866">
    <property type="interactions" value="2"/>
</dbReference>
<dbReference type="STRING" id="9606.ENSP00000359034"/>
<dbReference type="GlyCosmos" id="Q5VTL7">
    <property type="glycosylation" value="2 sites, No reported glycans"/>
</dbReference>
<dbReference type="GlyGen" id="Q5VTL7">
    <property type="glycosylation" value="2 sites"/>
</dbReference>
<dbReference type="iPTMnet" id="Q5VTL7"/>
<dbReference type="PhosphoSitePlus" id="Q5VTL7"/>
<dbReference type="BioMuta" id="FNDC7"/>
<dbReference type="DMDM" id="380865465"/>
<dbReference type="MassIVE" id="Q5VTL7"/>
<dbReference type="PaxDb" id="9606-ENSP00000359034"/>
<dbReference type="PeptideAtlas" id="Q5VTL7"/>
<dbReference type="ProteomicsDB" id="65334"/>
<dbReference type="Antibodypedia" id="33735">
    <property type="antibodies" value="110 antibodies from 18 providers"/>
</dbReference>
<dbReference type="DNASU" id="163479"/>
<dbReference type="Ensembl" id="ENST00000370017.9">
    <property type="protein sequence ID" value="ENSP00000359034.3"/>
    <property type="gene ID" value="ENSG00000143107.10"/>
</dbReference>
<dbReference type="GeneID" id="163479"/>
<dbReference type="KEGG" id="hsa:163479"/>
<dbReference type="MANE-Select" id="ENST00000370017.9">
    <property type="protein sequence ID" value="ENSP00000359034.3"/>
    <property type="RefSeq nucleotide sequence ID" value="NM_001144937.3"/>
    <property type="RefSeq protein sequence ID" value="NP_001138409.1"/>
</dbReference>
<dbReference type="UCSC" id="uc001dvx.4">
    <property type="organism name" value="human"/>
</dbReference>
<dbReference type="AGR" id="HGNC:26668"/>
<dbReference type="CTD" id="163479"/>
<dbReference type="GeneCards" id="FNDC7"/>
<dbReference type="HGNC" id="HGNC:26668">
    <property type="gene designation" value="FNDC7"/>
</dbReference>
<dbReference type="HPA" id="ENSG00000143107">
    <property type="expression patterns" value="Tissue enhanced (testis)"/>
</dbReference>
<dbReference type="neXtProt" id="NX_Q5VTL7"/>
<dbReference type="OpenTargets" id="ENSG00000143107"/>
<dbReference type="PharmGKB" id="PA142671756"/>
<dbReference type="VEuPathDB" id="HostDB:ENSG00000143107"/>
<dbReference type="eggNOG" id="ENOG502QTU0">
    <property type="taxonomic scope" value="Eukaryota"/>
</dbReference>
<dbReference type="GeneTree" id="ENSGT00390000004674"/>
<dbReference type="InParanoid" id="Q5VTL7"/>
<dbReference type="OMA" id="GFNVVEC"/>
<dbReference type="OrthoDB" id="9927686at2759"/>
<dbReference type="PAN-GO" id="Q5VTL7">
    <property type="GO annotations" value="0 GO annotations based on evolutionary models"/>
</dbReference>
<dbReference type="TreeFam" id="TF331331"/>
<dbReference type="PathwayCommons" id="Q5VTL7"/>
<dbReference type="BioGRID-ORCS" id="163479">
    <property type="hits" value="10 hits in 1134 CRISPR screens"/>
</dbReference>
<dbReference type="GenomeRNAi" id="163479"/>
<dbReference type="Pharos" id="Q5VTL7">
    <property type="development level" value="Tdark"/>
</dbReference>
<dbReference type="PRO" id="PR:Q5VTL7"/>
<dbReference type="Proteomes" id="UP000005640">
    <property type="component" value="Chromosome 1"/>
</dbReference>
<dbReference type="RNAct" id="Q5VTL7">
    <property type="molecule type" value="protein"/>
</dbReference>
<dbReference type="Bgee" id="ENSG00000143107">
    <property type="expression patterns" value="Expressed in left testis and 18 other cell types or tissues"/>
</dbReference>
<dbReference type="ExpressionAtlas" id="Q5VTL7">
    <property type="expression patterns" value="baseline and differential"/>
</dbReference>
<dbReference type="GO" id="GO:0005576">
    <property type="term" value="C:extracellular region"/>
    <property type="evidence" value="ECO:0007669"/>
    <property type="project" value="UniProtKB-SubCell"/>
</dbReference>
<dbReference type="CDD" id="cd00063">
    <property type="entry name" value="FN3"/>
    <property type="match status" value="5"/>
</dbReference>
<dbReference type="Gene3D" id="2.60.40.10">
    <property type="entry name" value="Immunoglobulins"/>
    <property type="match status" value="4"/>
</dbReference>
<dbReference type="InterPro" id="IPR003961">
    <property type="entry name" value="FN3_dom"/>
</dbReference>
<dbReference type="InterPro" id="IPR036116">
    <property type="entry name" value="FN3_sf"/>
</dbReference>
<dbReference type="InterPro" id="IPR013783">
    <property type="entry name" value="Ig-like_fold"/>
</dbReference>
<dbReference type="PANTHER" id="PTHR47135">
    <property type="entry name" value="FIBRONECTIN TYPE III DOMAIN-CONTAINING PROTEIN 7"/>
    <property type="match status" value="1"/>
</dbReference>
<dbReference type="PANTHER" id="PTHR47135:SF1">
    <property type="entry name" value="FIBRONECTIN TYPE III DOMAIN-CONTAINING PROTEIN 7"/>
    <property type="match status" value="1"/>
</dbReference>
<dbReference type="Pfam" id="PF00041">
    <property type="entry name" value="fn3"/>
    <property type="match status" value="2"/>
</dbReference>
<dbReference type="SMART" id="SM00060">
    <property type="entry name" value="FN3"/>
    <property type="match status" value="7"/>
</dbReference>
<dbReference type="SUPFAM" id="SSF49265">
    <property type="entry name" value="Fibronectin type III"/>
    <property type="match status" value="4"/>
</dbReference>
<dbReference type="PROSITE" id="PS50853">
    <property type="entry name" value="FN3"/>
    <property type="match status" value="7"/>
</dbReference>
<sequence>MAGGRETCLPLIGFILICLKMVASAKSAPEIPTIDQAYSKLSNSITVEWATVPGATSYLLTAEDGDTVIETTVANSPGTVTGLKAATWYEITIRSISAAGRSQASPPKQAKTVLAAPILEVSSPSSDSILVQWEAVYMAIAFSVSIMRANGLGSIWKENTTNTSLTFTSLEAGTLYTIKAYAWNANRIPGDDSTCNQRTSPRAPANIQVSFDSGALKASFSWARAEGAFNYTVMALSDSSELTCSTTFSSCTISSLQCGTEYLISVLASNDAGSSKSSSAMTLKTVACAPGRVTIQEDPPGHLSVAWSSVDLGDYYVVFVKSDDGLEVHCNTSLTQCNFLSECGFTYFISVFVYNKAGQSPLGDIFNYTTAPCCPSDINPVLVSSDRVEIVWSPVRGAELYETKAVDGYNMVECNDTTPACTLSALECDTKYNITVYSFNEVRGSNMSCTPQFITTAPCSPEIKNVSRDAFSMINVHWRSTNDDATYTVTAQGEKGLYQCSSTGESCTMRGLPCGSVFSVTAVAETQAGRSLPSYSVPLETVPCCPTGLTVTQITQSVINVSWTIGRVAQTHVAVLESHTGQSKCHTHQNHCLLGCITCGINYTVTLKAISATGLTADCSYQSYFSGACCPLGVKLYRLGPNGIRIYWQASRGSANYSTDLYGSKGIFTCTPSAGLSFCDVTEIPCGDVYTVMVSPVAKTGLKLTFCPKKIYSVTCSGSTLGMVIYRGKRNEE</sequence>